<keyword id="KW-0024">Alternative initiation</keyword>
<keyword id="KW-0025">Alternative splicing</keyword>
<keyword id="KW-1003">Cell membrane</keyword>
<keyword id="KW-0325">Glycoprotein</keyword>
<keyword id="KW-0472">Membrane</keyword>
<keyword id="KW-0597">Phosphoprotein</keyword>
<keyword id="KW-0628">Postsynaptic cell membrane</keyword>
<keyword id="KW-1267">Proteomics identification</keyword>
<keyword id="KW-1185">Reference proteome</keyword>
<keyword id="KW-0770">Synapse</keyword>
<keyword id="KW-0812">Transmembrane</keyword>
<keyword id="KW-1133">Transmembrane helix</keyword>
<name>PLPR4_HUMAN</name>
<sequence length="763" mass="82983">MQRAGSSGGRGECDISGAGRLGLEEAARLSCAVHTSPGGGRRPGQAAGMSAKERPKGKVIKDSVTLLPCFYFVELPILASSVVSLYFLELTDVFKPVHSGFSCYDRSLSMPYIEPTQEAIPFLMLLSLAFAGPAITIMVGEGILYCCLSKRRNGVGLEPNINAGGCNFNSFLRRAVRFVGVHVFGLCSTALITDIIQLSTGYQAPYFLTVCKPNYTSLNVSCKENSYIVEDICSGSDLTVINSGRKSFPSQHATLAAFAAVYVSMYFNSTLTDSSKLLKPLLVFTFIICGIICGLTRITQYKNHPVDVYCGFLIGGGIALYLGLYAVGNFLPSDESMFQHRDALRSLTDLNQDPNRLLSAKNGSSSDGIAHTEGILNRNHRDASSLTNLKRANADVEIITPRSPMGKENMVTFSNTLPRANTPSVEDPVRRNASIHASMDSARSKQLLTQWKNKNESRKLSLQVIEPEPGQSPPRSIEMRSSSEPSRVGVNGDHHGPGNQYLKIQPGAVPGCNNSMPGGPRVSIQSRPGSSQLVHIPEETQENISTSPKSSSARAKWLKAAEKTVACNRSNSQPRIMQVIAMSKQQGVLQSSPKNTEGSTVSCTGSIRYKTLTDHEPSGIVRVEAHPENNRPIIQIPSTEGEGSGSWKWKAPEKGSLRQTYELNDLNRDSESCESLKDSFGSGDRKRSNIDSNEHHHHGITTIRVTPVEGSEIGSETLSISSSRDSTLRRKGNIILIPERSNSPENTRNIFYKGTSPTRAYKD</sequence>
<evidence type="ECO:0000250" key="1">
    <source>
        <dbReference type="UniProtKB" id="Q7TMB7"/>
    </source>
</evidence>
<evidence type="ECO:0000250" key="2">
    <source>
        <dbReference type="UniProtKB" id="Q7TME0"/>
    </source>
</evidence>
<evidence type="ECO:0000255" key="3"/>
<evidence type="ECO:0000256" key="4">
    <source>
        <dbReference type="SAM" id="MobiDB-lite"/>
    </source>
</evidence>
<evidence type="ECO:0000269" key="5">
    <source>
    </source>
</evidence>
<evidence type="ECO:0000269" key="6">
    <source>
    </source>
</evidence>
<evidence type="ECO:0000269" key="7">
    <source>
    </source>
</evidence>
<evidence type="ECO:0000269" key="8">
    <source>
    </source>
</evidence>
<evidence type="ECO:0000303" key="9">
    <source>
    </source>
</evidence>
<evidence type="ECO:0000303" key="10">
    <source>
    </source>
</evidence>
<evidence type="ECO:0000303" key="11">
    <source>
    </source>
</evidence>
<evidence type="ECO:0000303" key="12">
    <source ref="2"/>
</evidence>
<evidence type="ECO:0000303" key="13">
    <source ref="7"/>
</evidence>
<evidence type="ECO:0000305" key="14"/>
<evidence type="ECO:0000305" key="15">
    <source>
    </source>
</evidence>
<evidence type="ECO:0000305" key="16">
    <source>
    </source>
</evidence>
<evidence type="ECO:0000312" key="17">
    <source>
        <dbReference type="HGNC" id="HGNC:23496"/>
    </source>
</evidence>
<accession>Q7Z2D5</accession>
<accession>E7EPS1</accession>
<accession>O75043</accession>
<accession>Q5T9R9</accession>
<accession>Q86XQ5</accession>
<accession>Q8N3F1</accession>
<accession>Q96MP0</accession>
<comment type="function">
    <text evidence="1 2">Postsynaptic density membrane protein that indirectly regulates glutamatergic synaptic transmission through lysophosphatidic acid (LPA)-mediated signaling pathways. Binds lysophosphatidic acid (LPA) and mediates its internalization into cells. Could act as receptor or a transporter of this lipid at the post-synaptic membrane (By similarity). Modulates lysophosphatidic acid (LPA) activity in neuron axonal outgrowth during development by attenuating phospholipid-induced axon collapse (By similarity).</text>
</comment>
<comment type="subcellular location">
    <subcellularLocation>
        <location evidence="7">Postsynaptic density membrane</location>
        <topology evidence="3">Multi-pass membrane protein</topology>
    </subcellularLocation>
</comment>
<comment type="alternative products">
    <event type="alternative splicing"/>
    <event type="alternative initiation"/>
    <isoform>
        <id>Q7Z2D5-1</id>
        <name>1</name>
        <sequence type="displayed"/>
    </isoform>
    <isoform>
        <id>Q7Z2D5-2</id>
        <name>2</name>
        <sequence type="described" ref="VSP_030950 VSP_030951"/>
    </isoform>
    <isoform>
        <id>Q7Z2D5-3</id>
        <name>3</name>
        <sequence type="described" ref="VSP_046784"/>
    </isoform>
    <isoform>
        <id>Q7Z2D5-4</id>
        <name>4</name>
        <sequence type="described" ref="VSP_062188"/>
    </isoform>
</comment>
<comment type="tissue specificity">
    <text evidence="7">Expressed by glutamatergic neurons (at protein level).</text>
</comment>
<comment type="PTM">
    <text evidence="2">O-glycosylated. Probably at Ser-346.</text>
</comment>
<comment type="similarity">
    <text evidence="14">Belongs to the PA-phosphatase related phosphoesterase family.</text>
</comment>
<comment type="caution">
    <text evidence="5 6">Originally described as a 2-lysophosphatidate/LPA phosphatase (PubMed:12730698). However, following studies suggested it does not have such activity or only a residual one (PubMed:15280885). This is further supported by the fact that the phosphatase sequence motifs as well as the His residue acting as a nucleophile in active phosphatases of the PA-phosphatase related phosphoesterase family are not conserved (PubMed:15280885).</text>
</comment>
<comment type="sequence caution" evidence="14">
    <conflict type="erroneous initiation">
        <sequence resource="EMBL-CDS" id="BAA32300"/>
    </conflict>
</comment>
<comment type="sequence caution" evidence="14">
    <conflict type="erroneous gene model prediction">
        <sequence resource="EMBL-CDS" id="EAW72991"/>
    </conflict>
</comment>
<dbReference type="EMBL" id="AF541281">
    <property type="protein sequence ID" value="AAP57770.1"/>
    <property type="molecule type" value="mRNA"/>
</dbReference>
<dbReference type="EMBL" id="AY304518">
    <property type="protein sequence ID" value="AAP72155.1"/>
    <property type="molecule type" value="mRNA"/>
</dbReference>
<dbReference type="EMBL" id="AB007924">
    <property type="protein sequence ID" value="BAA32300.3"/>
    <property type="status" value="ALT_INIT"/>
    <property type="molecule type" value="mRNA"/>
</dbReference>
<dbReference type="EMBL" id="AK056665">
    <property type="protein sequence ID" value="BAB71245.1"/>
    <property type="molecule type" value="mRNA"/>
</dbReference>
<dbReference type="EMBL" id="AK291369">
    <property type="protein sequence ID" value="BAF84058.1"/>
    <property type="molecule type" value="mRNA"/>
</dbReference>
<dbReference type="EMBL" id="AL136147">
    <property type="status" value="NOT_ANNOTATED_CDS"/>
    <property type="molecule type" value="Genomic_DNA"/>
</dbReference>
<dbReference type="EMBL" id="AL139425">
    <property type="status" value="NOT_ANNOTATED_CDS"/>
    <property type="molecule type" value="Genomic_DNA"/>
</dbReference>
<dbReference type="EMBL" id="CH471097">
    <property type="protein sequence ID" value="EAW72991.1"/>
    <property type="status" value="ALT_SEQ"/>
    <property type="molecule type" value="Genomic_DNA"/>
</dbReference>
<dbReference type="EMBL" id="CH471097">
    <property type="protein sequence ID" value="EAW72992.1"/>
    <property type="molecule type" value="Genomic_DNA"/>
</dbReference>
<dbReference type="EMBL" id="AF357013">
    <property type="protein sequence ID" value="AAO85400.1"/>
    <property type="molecule type" value="mRNA"/>
</dbReference>
<dbReference type="EMBL" id="AL834390">
    <property type="protein sequence ID" value="CAD39052.1"/>
    <property type="molecule type" value="mRNA"/>
</dbReference>
<dbReference type="CCDS" id="CCDS757.2">
    <molecule id="Q7Z2D5-4"/>
</dbReference>
<dbReference type="RefSeq" id="NP_001159724.1">
    <property type="nucleotide sequence ID" value="NM_001166252.1"/>
</dbReference>
<dbReference type="RefSeq" id="NP_055654.2">
    <molecule id="Q7Z2D5-4"/>
    <property type="nucleotide sequence ID" value="NM_014839.4"/>
</dbReference>
<dbReference type="SMR" id="Q7Z2D5"/>
<dbReference type="BioGRID" id="115220">
    <property type="interactions" value="12"/>
</dbReference>
<dbReference type="FunCoup" id="Q7Z2D5">
    <property type="interactions" value="97"/>
</dbReference>
<dbReference type="IntAct" id="Q7Z2D5">
    <property type="interactions" value="9"/>
</dbReference>
<dbReference type="STRING" id="9606.ENSP00000359204"/>
<dbReference type="DEPOD" id="PLPPR4"/>
<dbReference type="GlyCosmos" id="Q7Z2D5">
    <property type="glycosylation" value="9 sites, No reported glycans"/>
</dbReference>
<dbReference type="GlyGen" id="Q7Z2D5">
    <property type="glycosylation" value="10 sites, 1 O-linked glycan (1 site)"/>
</dbReference>
<dbReference type="iPTMnet" id="Q7Z2D5"/>
<dbReference type="PhosphoSitePlus" id="Q7Z2D5"/>
<dbReference type="BioMuta" id="PLPPR4"/>
<dbReference type="DMDM" id="74750018"/>
<dbReference type="jPOST" id="Q7Z2D5"/>
<dbReference type="MassIVE" id="Q7Z2D5"/>
<dbReference type="PaxDb" id="9606-ENSP00000359204"/>
<dbReference type="PeptideAtlas" id="Q7Z2D5"/>
<dbReference type="ProteomicsDB" id="17424"/>
<dbReference type="ProteomicsDB" id="68943">
    <molecule id="Q7Z2D5-1"/>
</dbReference>
<dbReference type="ProteomicsDB" id="68944">
    <molecule id="Q7Z2D5-2"/>
</dbReference>
<dbReference type="Antibodypedia" id="1575">
    <property type="antibodies" value="105 antibodies from 24 providers"/>
</dbReference>
<dbReference type="DNASU" id="9890"/>
<dbReference type="Ensembl" id="ENST00000370185.9">
    <molecule id="Q7Z2D5-4"/>
    <property type="protein sequence ID" value="ENSP00000359204.4"/>
    <property type="gene ID" value="ENSG00000117600.14"/>
</dbReference>
<dbReference type="GeneID" id="9890"/>
<dbReference type="KEGG" id="hsa:9890"/>
<dbReference type="MANE-Select" id="ENST00000370185.9">
    <molecule id="Q7Z2D5-4"/>
    <property type="protein sequence ID" value="ENSP00000359204.4"/>
    <property type="RefSeq nucleotide sequence ID" value="NM_014839.5"/>
    <property type="RefSeq protein sequence ID" value="NP_055654.3"/>
</dbReference>
<dbReference type="UCSC" id="uc001dse.4">
    <molecule id="Q7Z2D5-1"/>
    <property type="organism name" value="human"/>
</dbReference>
<dbReference type="AGR" id="HGNC:23496"/>
<dbReference type="CTD" id="9890"/>
<dbReference type="DisGeNET" id="9890"/>
<dbReference type="GeneCards" id="PLPPR4"/>
<dbReference type="HGNC" id="HGNC:23496">
    <property type="gene designation" value="PLPPR4"/>
</dbReference>
<dbReference type="HPA" id="ENSG00000117600">
    <property type="expression patterns" value="Tissue enriched (brain)"/>
</dbReference>
<dbReference type="MIM" id="607813">
    <property type="type" value="gene"/>
</dbReference>
<dbReference type="neXtProt" id="NX_Q7Z2D5"/>
<dbReference type="OpenTargets" id="ENSG00000117600"/>
<dbReference type="VEuPathDB" id="HostDB:ENSG00000117600"/>
<dbReference type="eggNOG" id="KOG3030">
    <property type="taxonomic scope" value="Eukaryota"/>
</dbReference>
<dbReference type="GeneTree" id="ENSGT00940000156181"/>
<dbReference type="HOGENOM" id="CLU_021458_8_0_1"/>
<dbReference type="InParanoid" id="Q7Z2D5"/>
<dbReference type="OMA" id="EIIMPRS"/>
<dbReference type="OrthoDB" id="8907274at2759"/>
<dbReference type="PAN-GO" id="Q7Z2D5">
    <property type="GO annotations" value="6 GO annotations based on evolutionary models"/>
</dbReference>
<dbReference type="PhylomeDB" id="Q7Z2D5"/>
<dbReference type="BRENDA" id="3.1.3.4">
    <property type="organism ID" value="2681"/>
</dbReference>
<dbReference type="PathwayCommons" id="Q7Z2D5"/>
<dbReference type="Reactome" id="R-HSA-419408">
    <property type="pathway name" value="Lysosphingolipid and LPA receptors"/>
</dbReference>
<dbReference type="SignaLink" id="Q7Z2D5"/>
<dbReference type="BioGRID-ORCS" id="9890">
    <property type="hits" value="5 hits in 1091 CRISPR screens"/>
</dbReference>
<dbReference type="CD-CODE" id="FB4E32DD">
    <property type="entry name" value="Presynaptic clusters and postsynaptic densities"/>
</dbReference>
<dbReference type="ChiTaRS" id="PLPPR4">
    <property type="organism name" value="human"/>
</dbReference>
<dbReference type="GenomeRNAi" id="9890"/>
<dbReference type="Pharos" id="Q7Z2D5">
    <property type="development level" value="Tbio"/>
</dbReference>
<dbReference type="PRO" id="PR:Q7Z2D5"/>
<dbReference type="Proteomes" id="UP000005640">
    <property type="component" value="Chromosome 1"/>
</dbReference>
<dbReference type="RNAct" id="Q7Z2D5">
    <property type="molecule type" value="protein"/>
</dbReference>
<dbReference type="Bgee" id="ENSG00000117600">
    <property type="expression patterns" value="Expressed in CA1 field of hippocampus and 144 other cell types or tissues"/>
</dbReference>
<dbReference type="GO" id="GO:0098978">
    <property type="term" value="C:glutamatergic synapse"/>
    <property type="evidence" value="ECO:0007669"/>
    <property type="project" value="Ensembl"/>
</dbReference>
<dbReference type="GO" id="GO:0005886">
    <property type="term" value="C:plasma membrane"/>
    <property type="evidence" value="ECO:0000318"/>
    <property type="project" value="GO_Central"/>
</dbReference>
<dbReference type="GO" id="GO:0098839">
    <property type="term" value="C:postsynaptic density membrane"/>
    <property type="evidence" value="ECO:0000314"/>
    <property type="project" value="UniProtKB"/>
</dbReference>
<dbReference type="GO" id="GO:0098685">
    <property type="term" value="C:Schaffer collateral - CA1 synapse"/>
    <property type="evidence" value="ECO:0007669"/>
    <property type="project" value="Ensembl"/>
</dbReference>
<dbReference type="GO" id="GO:0008195">
    <property type="term" value="F:phosphatidate phosphatase activity"/>
    <property type="evidence" value="ECO:0000318"/>
    <property type="project" value="GO_Central"/>
</dbReference>
<dbReference type="GO" id="GO:0007409">
    <property type="term" value="P:axonogenesis"/>
    <property type="evidence" value="ECO:0000318"/>
    <property type="project" value="GO_Central"/>
</dbReference>
<dbReference type="GO" id="GO:0007186">
    <property type="term" value="P:G protein-coupled receptor signaling pathway"/>
    <property type="evidence" value="ECO:0000250"/>
    <property type="project" value="UniProtKB"/>
</dbReference>
<dbReference type="GO" id="GO:0048839">
    <property type="term" value="P:inner ear development"/>
    <property type="evidence" value="ECO:0007669"/>
    <property type="project" value="Ensembl"/>
</dbReference>
<dbReference type="GO" id="GO:0140354">
    <property type="term" value="P:lipid import into cell"/>
    <property type="evidence" value="ECO:0000250"/>
    <property type="project" value="UniProtKB"/>
</dbReference>
<dbReference type="GO" id="GO:0006644">
    <property type="term" value="P:phospholipid metabolic process"/>
    <property type="evidence" value="ECO:0000318"/>
    <property type="project" value="GO_Central"/>
</dbReference>
<dbReference type="GO" id="GO:0099175">
    <property type="term" value="P:regulation of postsynapse organization"/>
    <property type="evidence" value="ECO:0007669"/>
    <property type="project" value="Ensembl"/>
</dbReference>
<dbReference type="GO" id="GO:0051966">
    <property type="term" value="P:regulation of synaptic transmission, glutamatergic"/>
    <property type="evidence" value="ECO:0000250"/>
    <property type="project" value="UniProtKB"/>
</dbReference>
<dbReference type="GO" id="GO:0007165">
    <property type="term" value="P:signal transduction"/>
    <property type="evidence" value="ECO:0000318"/>
    <property type="project" value="GO_Central"/>
</dbReference>
<dbReference type="CDD" id="cd03384">
    <property type="entry name" value="PAP2_wunen"/>
    <property type="match status" value="1"/>
</dbReference>
<dbReference type="FunFam" id="1.20.144.10:FF:000012">
    <property type="entry name" value="Phospholipid phosphatase-related protein type 4"/>
    <property type="match status" value="1"/>
</dbReference>
<dbReference type="Gene3D" id="1.20.144.10">
    <property type="entry name" value="Phosphatidic acid phosphatase type 2/haloperoxidase"/>
    <property type="match status" value="1"/>
</dbReference>
<dbReference type="InterPro" id="IPR036938">
    <property type="entry name" value="P_Acid_Pase_2/haloperoxi_sf"/>
</dbReference>
<dbReference type="InterPro" id="IPR000326">
    <property type="entry name" value="P_Acid_Pase_2/haloperoxidase"/>
</dbReference>
<dbReference type="InterPro" id="IPR043216">
    <property type="entry name" value="PA_PP_rel"/>
</dbReference>
<dbReference type="PANTHER" id="PTHR10165">
    <property type="entry name" value="LIPID PHOSPHATE PHOSPHATASE"/>
    <property type="match status" value="1"/>
</dbReference>
<dbReference type="PANTHER" id="PTHR10165:SF13">
    <property type="entry name" value="PHOSPHOLIPID PHOSPHATASE-RELATED PROTEIN TYPE 4"/>
    <property type="match status" value="1"/>
</dbReference>
<dbReference type="Pfam" id="PF01569">
    <property type="entry name" value="PAP2"/>
    <property type="match status" value="1"/>
</dbReference>
<dbReference type="SMART" id="SM00014">
    <property type="entry name" value="acidPPc"/>
    <property type="match status" value="1"/>
</dbReference>
<dbReference type="SUPFAM" id="SSF48317">
    <property type="entry name" value="Acid phosphatase/Vanadium-dependent haloperoxidase"/>
    <property type="match status" value="1"/>
</dbReference>
<gene>
    <name evidence="17" type="primary">PLPPR4</name>
    <name evidence="11" type="synonym">KIAA0455</name>
    <name evidence="12" type="synonym">LPPR4</name>
    <name evidence="13" type="synonym">PHP1</name>
    <name evidence="9" type="synonym">PRG1</name>
</gene>
<organism>
    <name type="scientific">Homo sapiens</name>
    <name type="common">Human</name>
    <dbReference type="NCBI Taxonomy" id="9606"/>
    <lineage>
        <taxon>Eukaryota</taxon>
        <taxon>Metazoa</taxon>
        <taxon>Chordata</taxon>
        <taxon>Craniata</taxon>
        <taxon>Vertebrata</taxon>
        <taxon>Euteleostomi</taxon>
        <taxon>Mammalia</taxon>
        <taxon>Eutheria</taxon>
        <taxon>Euarchontoglires</taxon>
        <taxon>Primates</taxon>
        <taxon>Haplorrhini</taxon>
        <taxon>Catarrhini</taxon>
        <taxon>Hominidae</taxon>
        <taxon>Homo</taxon>
    </lineage>
</organism>
<reference key="1">
    <citation type="journal article" date="2003" name="Nat. Neurosci.">
        <title>A new phospholipid phosphatase, PRG-1, is involved in axon growth and regenerative sprouting.</title>
        <authorList>
            <person name="Braeuer A.U."/>
            <person name="Savaskan N.E."/>
            <person name="Kuehn H."/>
            <person name="Prehn S."/>
            <person name="Ninnemann O."/>
            <person name="Nitsch R."/>
        </authorList>
    </citation>
    <scope>NUCLEOTIDE SEQUENCE [MRNA] (ISOFORM 1)</scope>
    <scope>CAUTION</scope>
    <source>
        <tissue>Brain</tissue>
    </source>
</reference>
<reference key="2">
    <citation type="submission" date="2003-05" db="EMBL/GenBank/DDBJ databases">
        <title>Lipid phosphate phosphatase related proteins.</title>
        <authorList>
            <person name="Morris A.J."/>
            <person name="Sigal Y.J."/>
            <person name="McDermott M."/>
            <person name="Sciorra V.A."/>
        </authorList>
    </citation>
    <scope>NUCLEOTIDE SEQUENCE [MRNA] (ISOFORM 1)</scope>
</reference>
<reference key="3">
    <citation type="journal article" date="1997" name="DNA Res.">
        <title>Characterization of cDNA clones in size-fractionated cDNA libraries from human brain.</title>
        <authorList>
            <person name="Seki N."/>
            <person name="Ohira M."/>
            <person name="Nagase T."/>
            <person name="Ishikawa K."/>
            <person name="Miyajima N."/>
            <person name="Nakajima D."/>
            <person name="Nomura N."/>
            <person name="Ohara O."/>
        </authorList>
    </citation>
    <scope>NUCLEOTIDE SEQUENCE [LARGE SCALE MRNA] (ISOFORM 1)</scope>
    <source>
        <tissue>Brain</tissue>
    </source>
</reference>
<reference key="4">
    <citation type="journal article" date="2004" name="Nat. Genet.">
        <title>Complete sequencing and characterization of 21,243 full-length human cDNAs.</title>
        <authorList>
            <person name="Ota T."/>
            <person name="Suzuki Y."/>
            <person name="Nishikawa T."/>
            <person name="Otsuki T."/>
            <person name="Sugiyama T."/>
            <person name="Irie R."/>
            <person name="Wakamatsu A."/>
            <person name="Hayashi K."/>
            <person name="Sato H."/>
            <person name="Nagai K."/>
            <person name="Kimura K."/>
            <person name="Makita H."/>
            <person name="Sekine M."/>
            <person name="Obayashi M."/>
            <person name="Nishi T."/>
            <person name="Shibahara T."/>
            <person name="Tanaka T."/>
            <person name="Ishii S."/>
            <person name="Yamamoto J."/>
            <person name="Saito K."/>
            <person name="Kawai Y."/>
            <person name="Isono Y."/>
            <person name="Nakamura Y."/>
            <person name="Nagahari K."/>
            <person name="Murakami K."/>
            <person name="Yasuda T."/>
            <person name="Iwayanagi T."/>
            <person name="Wagatsuma M."/>
            <person name="Shiratori A."/>
            <person name="Sudo H."/>
            <person name="Hosoiri T."/>
            <person name="Kaku Y."/>
            <person name="Kodaira H."/>
            <person name="Kondo H."/>
            <person name="Sugawara M."/>
            <person name="Takahashi M."/>
            <person name="Kanda K."/>
            <person name="Yokoi T."/>
            <person name="Furuya T."/>
            <person name="Kikkawa E."/>
            <person name="Omura Y."/>
            <person name="Abe K."/>
            <person name="Kamihara K."/>
            <person name="Katsuta N."/>
            <person name="Sato K."/>
            <person name="Tanikawa M."/>
            <person name="Yamazaki M."/>
            <person name="Ninomiya K."/>
            <person name="Ishibashi T."/>
            <person name="Yamashita H."/>
            <person name="Murakawa K."/>
            <person name="Fujimori K."/>
            <person name="Tanai H."/>
            <person name="Kimata M."/>
            <person name="Watanabe M."/>
            <person name="Hiraoka S."/>
            <person name="Chiba Y."/>
            <person name="Ishida S."/>
            <person name="Ono Y."/>
            <person name="Takiguchi S."/>
            <person name="Watanabe S."/>
            <person name="Yosida M."/>
            <person name="Hotuta T."/>
            <person name="Kusano J."/>
            <person name="Kanehori K."/>
            <person name="Takahashi-Fujii A."/>
            <person name="Hara H."/>
            <person name="Tanase T.-O."/>
            <person name="Nomura Y."/>
            <person name="Togiya S."/>
            <person name="Komai F."/>
            <person name="Hara R."/>
            <person name="Takeuchi K."/>
            <person name="Arita M."/>
            <person name="Imose N."/>
            <person name="Musashino K."/>
            <person name="Yuuki H."/>
            <person name="Oshima A."/>
            <person name="Sasaki N."/>
            <person name="Aotsuka S."/>
            <person name="Yoshikawa Y."/>
            <person name="Matsunawa H."/>
            <person name="Ichihara T."/>
            <person name="Shiohata N."/>
            <person name="Sano S."/>
            <person name="Moriya S."/>
            <person name="Momiyama H."/>
            <person name="Satoh N."/>
            <person name="Takami S."/>
            <person name="Terashima Y."/>
            <person name="Suzuki O."/>
            <person name="Nakagawa S."/>
            <person name="Senoh A."/>
            <person name="Mizoguchi H."/>
            <person name="Goto Y."/>
            <person name="Shimizu F."/>
            <person name="Wakebe H."/>
            <person name="Hishigaki H."/>
            <person name="Watanabe T."/>
            <person name="Sugiyama A."/>
            <person name="Takemoto M."/>
            <person name="Kawakami B."/>
            <person name="Yamazaki M."/>
            <person name="Watanabe K."/>
            <person name="Kumagai A."/>
            <person name="Itakura S."/>
            <person name="Fukuzumi Y."/>
            <person name="Fujimori Y."/>
            <person name="Komiyama M."/>
            <person name="Tashiro H."/>
            <person name="Tanigami A."/>
            <person name="Fujiwara T."/>
            <person name="Ono T."/>
            <person name="Yamada K."/>
            <person name="Fujii Y."/>
            <person name="Ozaki K."/>
            <person name="Hirao M."/>
            <person name="Ohmori Y."/>
            <person name="Kawabata A."/>
            <person name="Hikiji T."/>
            <person name="Kobatake N."/>
            <person name="Inagaki H."/>
            <person name="Ikema Y."/>
            <person name="Okamoto S."/>
            <person name="Okitani R."/>
            <person name="Kawakami T."/>
            <person name="Noguchi S."/>
            <person name="Itoh T."/>
            <person name="Shigeta K."/>
            <person name="Senba T."/>
            <person name="Matsumura K."/>
            <person name="Nakajima Y."/>
            <person name="Mizuno T."/>
            <person name="Morinaga M."/>
            <person name="Sasaki M."/>
            <person name="Togashi T."/>
            <person name="Oyama M."/>
            <person name="Hata H."/>
            <person name="Watanabe M."/>
            <person name="Komatsu T."/>
            <person name="Mizushima-Sugano J."/>
            <person name="Satoh T."/>
            <person name="Shirai Y."/>
            <person name="Takahashi Y."/>
            <person name="Nakagawa K."/>
            <person name="Okumura K."/>
            <person name="Nagase T."/>
            <person name="Nomura N."/>
            <person name="Kikuchi H."/>
            <person name="Masuho Y."/>
            <person name="Yamashita R."/>
            <person name="Nakai K."/>
            <person name="Yada T."/>
            <person name="Nakamura Y."/>
            <person name="Ohara O."/>
            <person name="Isogai T."/>
            <person name="Sugano S."/>
        </authorList>
    </citation>
    <scope>NUCLEOTIDE SEQUENCE [LARGE SCALE MRNA] (ISOFORM 2)</scope>
    <scope>NUCLEOTIDE SEQUENCE [LARGE SCALE MRNA] OF 15-763 (ISOFORM 1)</scope>
    <source>
        <tissue>Brain</tissue>
    </source>
</reference>
<reference key="5">
    <citation type="journal article" date="2006" name="Nature">
        <title>The DNA sequence and biological annotation of human chromosome 1.</title>
        <authorList>
            <person name="Gregory S.G."/>
            <person name="Barlow K.F."/>
            <person name="McLay K.E."/>
            <person name="Kaul R."/>
            <person name="Swarbreck D."/>
            <person name="Dunham A."/>
            <person name="Scott C.E."/>
            <person name="Howe K.L."/>
            <person name="Woodfine K."/>
            <person name="Spencer C.C.A."/>
            <person name="Jones M.C."/>
            <person name="Gillson C."/>
            <person name="Searle S."/>
            <person name="Zhou Y."/>
            <person name="Kokocinski F."/>
            <person name="McDonald L."/>
            <person name="Evans R."/>
            <person name="Phillips K."/>
            <person name="Atkinson A."/>
            <person name="Cooper R."/>
            <person name="Jones C."/>
            <person name="Hall R.E."/>
            <person name="Andrews T.D."/>
            <person name="Lloyd C."/>
            <person name="Ainscough R."/>
            <person name="Almeida J.P."/>
            <person name="Ambrose K.D."/>
            <person name="Anderson F."/>
            <person name="Andrew R.W."/>
            <person name="Ashwell R.I.S."/>
            <person name="Aubin K."/>
            <person name="Babbage A.K."/>
            <person name="Bagguley C.L."/>
            <person name="Bailey J."/>
            <person name="Beasley H."/>
            <person name="Bethel G."/>
            <person name="Bird C.P."/>
            <person name="Bray-Allen S."/>
            <person name="Brown J.Y."/>
            <person name="Brown A.J."/>
            <person name="Buckley D."/>
            <person name="Burton J."/>
            <person name="Bye J."/>
            <person name="Carder C."/>
            <person name="Chapman J.C."/>
            <person name="Clark S.Y."/>
            <person name="Clarke G."/>
            <person name="Clee C."/>
            <person name="Cobley V."/>
            <person name="Collier R.E."/>
            <person name="Corby N."/>
            <person name="Coville G.J."/>
            <person name="Davies J."/>
            <person name="Deadman R."/>
            <person name="Dunn M."/>
            <person name="Earthrowl M."/>
            <person name="Ellington A.G."/>
            <person name="Errington H."/>
            <person name="Frankish A."/>
            <person name="Frankland J."/>
            <person name="French L."/>
            <person name="Garner P."/>
            <person name="Garnett J."/>
            <person name="Gay L."/>
            <person name="Ghori M.R.J."/>
            <person name="Gibson R."/>
            <person name="Gilby L.M."/>
            <person name="Gillett W."/>
            <person name="Glithero R.J."/>
            <person name="Grafham D.V."/>
            <person name="Griffiths C."/>
            <person name="Griffiths-Jones S."/>
            <person name="Grocock R."/>
            <person name="Hammond S."/>
            <person name="Harrison E.S.I."/>
            <person name="Hart E."/>
            <person name="Haugen E."/>
            <person name="Heath P.D."/>
            <person name="Holmes S."/>
            <person name="Holt K."/>
            <person name="Howden P.J."/>
            <person name="Hunt A.R."/>
            <person name="Hunt S.E."/>
            <person name="Hunter G."/>
            <person name="Isherwood J."/>
            <person name="James R."/>
            <person name="Johnson C."/>
            <person name="Johnson D."/>
            <person name="Joy A."/>
            <person name="Kay M."/>
            <person name="Kershaw J.K."/>
            <person name="Kibukawa M."/>
            <person name="Kimberley A.M."/>
            <person name="King A."/>
            <person name="Knights A.J."/>
            <person name="Lad H."/>
            <person name="Laird G."/>
            <person name="Lawlor S."/>
            <person name="Leongamornlert D.A."/>
            <person name="Lloyd D.M."/>
            <person name="Loveland J."/>
            <person name="Lovell J."/>
            <person name="Lush M.J."/>
            <person name="Lyne R."/>
            <person name="Martin S."/>
            <person name="Mashreghi-Mohammadi M."/>
            <person name="Matthews L."/>
            <person name="Matthews N.S.W."/>
            <person name="McLaren S."/>
            <person name="Milne S."/>
            <person name="Mistry S."/>
            <person name="Moore M.J.F."/>
            <person name="Nickerson T."/>
            <person name="O'Dell C.N."/>
            <person name="Oliver K."/>
            <person name="Palmeiri A."/>
            <person name="Palmer S.A."/>
            <person name="Parker A."/>
            <person name="Patel D."/>
            <person name="Pearce A.V."/>
            <person name="Peck A.I."/>
            <person name="Pelan S."/>
            <person name="Phelps K."/>
            <person name="Phillimore B.J."/>
            <person name="Plumb R."/>
            <person name="Rajan J."/>
            <person name="Raymond C."/>
            <person name="Rouse G."/>
            <person name="Saenphimmachak C."/>
            <person name="Sehra H.K."/>
            <person name="Sheridan E."/>
            <person name="Shownkeen R."/>
            <person name="Sims S."/>
            <person name="Skuce C.D."/>
            <person name="Smith M."/>
            <person name="Steward C."/>
            <person name="Subramanian S."/>
            <person name="Sycamore N."/>
            <person name="Tracey A."/>
            <person name="Tromans A."/>
            <person name="Van Helmond Z."/>
            <person name="Wall M."/>
            <person name="Wallis J.M."/>
            <person name="White S."/>
            <person name="Whitehead S.L."/>
            <person name="Wilkinson J.E."/>
            <person name="Willey D.L."/>
            <person name="Williams H."/>
            <person name="Wilming L."/>
            <person name="Wray P.W."/>
            <person name="Wu Z."/>
            <person name="Coulson A."/>
            <person name="Vaudin M."/>
            <person name="Sulston J.E."/>
            <person name="Durbin R.M."/>
            <person name="Hubbard T."/>
            <person name="Wooster R."/>
            <person name="Dunham I."/>
            <person name="Carter N.P."/>
            <person name="McVean G."/>
            <person name="Ross M.T."/>
            <person name="Harrow J."/>
            <person name="Olson M.V."/>
            <person name="Beck S."/>
            <person name="Rogers J."/>
            <person name="Bentley D.R."/>
        </authorList>
    </citation>
    <scope>NUCLEOTIDE SEQUENCE [LARGE SCALE GENOMIC DNA]</scope>
</reference>
<reference key="6">
    <citation type="submission" date="2005-09" db="EMBL/GenBank/DDBJ databases">
        <authorList>
            <person name="Mural R.J."/>
            <person name="Istrail S."/>
            <person name="Sutton G.G."/>
            <person name="Florea L."/>
            <person name="Halpern A.L."/>
            <person name="Mobarry C.M."/>
            <person name="Lippert R."/>
            <person name="Walenz B."/>
            <person name="Shatkay H."/>
            <person name="Dew I."/>
            <person name="Miller J.R."/>
            <person name="Flanigan M.J."/>
            <person name="Edwards N.J."/>
            <person name="Bolanos R."/>
            <person name="Fasulo D."/>
            <person name="Halldorsson B.V."/>
            <person name="Hannenhalli S."/>
            <person name="Turner R."/>
            <person name="Yooseph S."/>
            <person name="Lu F."/>
            <person name="Nusskern D.R."/>
            <person name="Shue B.C."/>
            <person name="Zheng X.H."/>
            <person name="Zhong F."/>
            <person name="Delcher A.L."/>
            <person name="Huson D.H."/>
            <person name="Kravitz S.A."/>
            <person name="Mouchard L."/>
            <person name="Reinert K."/>
            <person name="Remington K.A."/>
            <person name="Clark A.G."/>
            <person name="Waterman M.S."/>
            <person name="Eichler E.E."/>
            <person name="Adams M.D."/>
            <person name="Hunkapiller M.W."/>
            <person name="Myers E.W."/>
            <person name="Venter J.C."/>
        </authorList>
    </citation>
    <scope>NUCLEOTIDE SEQUENCE [LARGE SCALE GENOMIC DNA]</scope>
</reference>
<reference key="7">
    <citation type="submission" date="2001-03" db="EMBL/GenBank/DDBJ databases">
        <title>A new brain specific member of the PAP-2 family.</title>
        <authorList>
            <person name="Ninnemann O."/>
            <person name="Brauer A.U."/>
            <person name="Savaskan N."/>
            <person name="Nitsch R."/>
        </authorList>
    </citation>
    <scope>NUCLEOTIDE SEQUENCE [MRNA] OF 24-763 (ISOFORM 1)</scope>
</reference>
<reference key="8">
    <citation type="journal article" date="2007" name="BMC Genomics">
        <title>The full-ORF clone resource of the German cDNA consortium.</title>
        <authorList>
            <person name="Bechtel S."/>
            <person name="Rosenfelder H."/>
            <person name="Duda A."/>
            <person name="Schmidt C.P."/>
            <person name="Ernst U."/>
            <person name="Wellenreuther R."/>
            <person name="Mehrle A."/>
            <person name="Schuster C."/>
            <person name="Bahr A."/>
            <person name="Bloecker H."/>
            <person name="Heubner D."/>
            <person name="Hoerlein A."/>
            <person name="Michel G."/>
            <person name="Wedler H."/>
            <person name="Koehrer K."/>
            <person name="Ottenwaelder B."/>
            <person name="Poustka A."/>
            <person name="Wiemann S."/>
            <person name="Schupp I."/>
        </authorList>
    </citation>
    <scope>NUCLEOTIDE SEQUENCE [LARGE SCALE MRNA] OF 111-763 (ISOFORM 1)</scope>
    <source>
        <tissue>Amygdala</tissue>
    </source>
</reference>
<reference key="9">
    <citation type="journal article" date="2004" name="Nat. Neurosci.">
        <title>Is PRG-1 a new lipid phosphatase?</title>
        <authorList>
            <person name="McDermott M.I."/>
            <person name="Sigal Y.J."/>
            <person name="Sciorra V.A."/>
            <person name="Morris A.J."/>
        </authorList>
    </citation>
    <scope>CAUTION</scope>
</reference>
<reference key="10">
    <citation type="journal article" date="2016" name="EMBO Mol. Med.">
        <title>Molecular cause and functional impact of altered synaptic lipid signaling due to a prg-1 gene SNP.</title>
        <authorList>
            <person name="Vogt J."/>
            <person name="Yang J.W."/>
            <person name="Mobascher A."/>
            <person name="Cheng J."/>
            <person name="Li Y."/>
            <person name="Liu X."/>
            <person name="Baumgart J."/>
            <person name="Thalman C."/>
            <person name="Kirischuk S."/>
            <person name="Unichenko P."/>
            <person name="Horta G."/>
            <person name="Radyushkin K."/>
            <person name="Stroh A."/>
            <person name="Richers S."/>
            <person name="Sahragard N."/>
            <person name="Distler U."/>
            <person name="Tenzer S."/>
            <person name="Qiao L."/>
            <person name="Lieb K."/>
            <person name="Tuescher O."/>
            <person name="Binder H."/>
            <person name="Ferreiros N."/>
            <person name="Tegeder I."/>
            <person name="Morris A.J."/>
            <person name="Gropa S."/>
            <person name="Nuernberg P."/>
            <person name="Toliat M.R."/>
            <person name="Winterer G."/>
            <person name="Luhmann H.J."/>
            <person name="Huai J."/>
            <person name="Nitsch R."/>
        </authorList>
    </citation>
    <scope>VARIANT THR-345</scope>
    <scope>SUBCELLULAR LOCATION</scope>
    <scope>TISSUE SPECIFICITY</scope>
</reference>
<reference key="11">
    <citation type="journal article" date="2023" name="Cereb. Cortex">
        <title>Mutations in plasticity-related-gene-1 (PRG-1) protein contribute to hippocampal seizure susceptibility and modify epileptic phenotype.</title>
        <authorList>
            <person name="Knierim E."/>
            <person name="Vogt J."/>
            <person name="Kintscher M."/>
            <person name="Ponomarenko A."/>
            <person name="Baumgart J."/>
            <person name="Beed P."/>
            <person name="Korotkova T."/>
            <person name="Trimbuch T."/>
            <person name="Panzer A."/>
            <person name="Steinlein O.K."/>
            <person name="Stephani U."/>
            <person name="Escayg A."/>
            <person name="Koko M."/>
            <person name="Liu Y."/>
            <person name="Lerche H."/>
            <person name="Schmitz D."/>
            <person name="Nitsch R."/>
            <person name="Schuelke M."/>
        </authorList>
    </citation>
    <scope>VARIANTS SER-299 AND THR-345</scope>
</reference>
<feature type="chain" id="PRO_0000317436" description="Phospholipid phosphatase-related protein type 4">
    <location>
        <begin position="1"/>
        <end position="763"/>
    </location>
</feature>
<feature type="transmembrane region" description="Helical" evidence="3">
    <location>
        <begin position="67"/>
        <end position="87"/>
    </location>
</feature>
<feature type="transmembrane region" description="Helical" evidence="3">
    <location>
        <begin position="119"/>
        <end position="139"/>
    </location>
</feature>
<feature type="transmembrane region" description="Helical" evidence="3">
    <location>
        <begin position="178"/>
        <end position="198"/>
    </location>
</feature>
<feature type="transmembrane region" description="Helical" evidence="3">
    <location>
        <begin position="247"/>
        <end position="267"/>
    </location>
</feature>
<feature type="transmembrane region" description="Helical" evidence="3">
    <location>
        <begin position="276"/>
        <end position="296"/>
    </location>
</feature>
<feature type="transmembrane region" description="Helical" evidence="3">
    <location>
        <begin position="308"/>
        <end position="328"/>
    </location>
</feature>
<feature type="region of interest" description="Disordered" evidence="4">
    <location>
        <begin position="33"/>
        <end position="54"/>
    </location>
</feature>
<feature type="region of interest" description="Disordered" evidence="4">
    <location>
        <begin position="458"/>
        <end position="529"/>
    </location>
</feature>
<feature type="region of interest" description="Disordered" evidence="4">
    <location>
        <begin position="669"/>
        <end position="698"/>
    </location>
</feature>
<feature type="region of interest" description="Disordered" evidence="4">
    <location>
        <begin position="739"/>
        <end position="763"/>
    </location>
</feature>
<feature type="compositionally biased region" description="Basic and acidic residues" evidence="4">
    <location>
        <begin position="669"/>
        <end position="694"/>
    </location>
</feature>
<feature type="compositionally biased region" description="Polar residues" evidence="4">
    <location>
        <begin position="740"/>
        <end position="749"/>
    </location>
</feature>
<feature type="modified residue" description="Phosphoserine" evidence="2">
    <location>
        <position position="36"/>
    </location>
</feature>
<feature type="modified residue" description="Phosphoserine" evidence="2">
    <location>
        <position position="346"/>
    </location>
</feature>
<feature type="modified residue" description="Phosphoserine" evidence="1">
    <location>
        <position position="385"/>
    </location>
</feature>
<feature type="modified residue" description="Phosphoserine" evidence="2">
    <location>
        <position position="438"/>
    </location>
</feature>
<feature type="modified residue" description="Phosphoserine" evidence="2">
    <location>
        <position position="461"/>
    </location>
</feature>
<feature type="modified residue" description="Phosphoserine" evidence="1">
    <location>
        <position position="472"/>
    </location>
</feature>
<feature type="modified residue" description="Phosphoserine" evidence="2">
    <location>
        <position position="606"/>
    </location>
</feature>
<feature type="glycosylation site" description="N-linked (GlcNAc...) asparagine" evidence="3">
    <location>
        <position position="214"/>
    </location>
</feature>
<feature type="glycosylation site" description="N-linked (GlcNAc...) asparagine" evidence="3">
    <location>
        <position position="219"/>
    </location>
</feature>
<feature type="glycosylation site" description="N-linked (GlcNAc...) asparagine" evidence="3">
    <location>
        <position position="268"/>
    </location>
</feature>
<feature type="glycosylation site" description="N-linked (GlcNAc...) asparagine" evidence="3">
    <location>
        <position position="362"/>
    </location>
</feature>
<feature type="glycosylation site" description="N-linked (GlcNAc...) asparagine" evidence="3">
    <location>
        <position position="432"/>
    </location>
</feature>
<feature type="glycosylation site" description="N-linked (GlcNAc...) asparagine" evidence="3">
    <location>
        <position position="455"/>
    </location>
</feature>
<feature type="glycosylation site" description="N-linked (GlcNAc...) asparagine" evidence="3">
    <location>
        <position position="513"/>
    </location>
</feature>
<feature type="glycosylation site" description="N-linked (GlcNAc...) asparagine" evidence="3">
    <location>
        <position position="543"/>
    </location>
</feature>
<feature type="glycosylation site" description="N-linked (GlcNAc...) asparagine" evidence="3">
    <location>
        <position position="568"/>
    </location>
</feature>
<feature type="splice variant" id="VSP_062188" description="In isoform 4.">
    <location>
        <begin position="1"/>
        <end position="48"/>
    </location>
</feature>
<feature type="splice variant" id="VSP_046784" description="In isoform 3." evidence="14">
    <location>
        <begin position="265"/>
        <end position="322"/>
    </location>
</feature>
<feature type="splice variant" id="VSP_030950" description="In isoform 2." evidence="10">
    <original>SARAKWLKAAEKTVACNRSNSQPRIM</original>
    <variation>RVSSKAAPRTLKAARSPALAPSAIKP</variation>
    <location>
        <begin position="552"/>
        <end position="577"/>
    </location>
</feature>
<feature type="splice variant" id="VSP_030951" description="In isoform 2." evidence="10">
    <location>
        <begin position="578"/>
        <end position="763"/>
    </location>
</feature>
<feature type="sequence variant" id="VAR_050618" description="In dbSNP:rs712896.">
    <original>Q</original>
    <variation>K</variation>
    <location>
        <position position="2"/>
    </location>
</feature>
<feature type="sequence variant" id="VAR_050619" description="In dbSNP:rs35285687.">
    <original>A</original>
    <variation>V</variation>
    <location>
        <position position="32"/>
    </location>
</feature>
<feature type="sequence variant" id="VAR_088174" description="Found in a patient with infantile epileptic spasms also carrying a SCN1A variant; uncertain significance." evidence="8">
    <original>T</original>
    <variation>S</variation>
    <location>
        <position position="299"/>
    </location>
</feature>
<feature type="sequence variant" id="VAR_085196" description="In dbSNP:rs138327459." evidence="7 8">
    <original>R</original>
    <variation>T</variation>
    <location>
        <position position="345"/>
    </location>
</feature>
<feature type="sequence conflict" description="In Ref. 4; BAB71245." evidence="14" ref="4">
    <original>A</original>
    <variation>S</variation>
    <location>
        <position position="18"/>
    </location>
</feature>
<feature type="sequence conflict" description="In Ref. 8; CAD39052." evidence="14" ref="8">
    <original>L</original>
    <variation>R</variation>
    <location>
        <position position="718"/>
    </location>
</feature>
<proteinExistence type="evidence at protein level"/>
<protein>
    <recommendedName>
        <fullName evidence="14">Phospholipid phosphatase-related protein type 4</fullName>
    </recommendedName>
    <alternativeName>
        <fullName evidence="13">Brain-specific phosphatidic acid phosphatase-like protein 1</fullName>
    </alternativeName>
    <alternativeName>
        <fullName evidence="16">Inactive 2-lysophosphatidate phosphatase PLPPR4</fullName>
    </alternativeName>
    <alternativeName>
        <fullName evidence="12">Lipid phosphate phosphatase-related protein type 4</fullName>
    </alternativeName>
    <alternativeName>
        <fullName evidence="15">Plasticity-related gene 1 protein</fullName>
        <shortName evidence="9">PRG-1</shortName>
    </alternativeName>
</protein>